<proteinExistence type="evidence at protein level"/>
<name>AGRG3_HUMAN</name>
<evidence type="ECO:0000250" key="1">
    <source>
        <dbReference type="UniProtKB" id="Q6QNK2"/>
    </source>
</evidence>
<evidence type="ECO:0000255" key="2"/>
<evidence type="ECO:0000255" key="3">
    <source>
        <dbReference type="PROSITE-ProRule" id="PRU00098"/>
    </source>
</evidence>
<evidence type="ECO:0000269" key="4">
    <source>
    </source>
</evidence>
<evidence type="ECO:0000269" key="5">
    <source>
    </source>
</evidence>
<evidence type="ECO:0000269" key="6">
    <source>
    </source>
</evidence>
<evidence type="ECO:0000269" key="7">
    <source>
    </source>
</evidence>
<evidence type="ECO:0000269" key="8">
    <source>
    </source>
</evidence>
<evidence type="ECO:0000269" key="9">
    <source>
    </source>
</evidence>
<evidence type="ECO:0000303" key="10">
    <source>
    </source>
</evidence>
<evidence type="ECO:0000303" key="11">
    <source>
    </source>
</evidence>
<evidence type="ECO:0000303" key="12">
    <source>
    </source>
</evidence>
<evidence type="ECO:0000305" key="13"/>
<evidence type="ECO:0000312" key="14">
    <source>
        <dbReference type="HGNC" id="HGNC:13728"/>
    </source>
</evidence>
<evidence type="ECO:0007744" key="15">
    <source>
        <dbReference type="PDB" id="7D76"/>
    </source>
</evidence>
<evidence type="ECO:0007744" key="16">
    <source>
        <dbReference type="PDB" id="7D77"/>
    </source>
</evidence>
<evidence type="ECO:0007744" key="17">
    <source>
        <dbReference type="PDB" id="7QU8"/>
    </source>
</evidence>
<evidence type="ECO:0007829" key="18">
    <source>
        <dbReference type="PDB" id="7D77"/>
    </source>
</evidence>
<evidence type="ECO:0007829" key="19">
    <source>
        <dbReference type="PDB" id="7QU8"/>
    </source>
</evidence>
<reference key="1">
    <citation type="submission" date="2000-09" db="EMBL/GenBank/DDBJ databases">
        <title>A member of G-protein coupled receptor family.</title>
        <authorList>
            <person name="Okaze H."/>
            <person name="Hayashi A."/>
            <person name="Kozuma S."/>
            <person name="Saito T."/>
        </authorList>
    </citation>
    <scope>NUCLEOTIDE SEQUENCE [MRNA]</scope>
</reference>
<reference key="2">
    <citation type="journal article" date="2002" name="FEBS Lett.">
        <title>Novel human G protein-coupled receptors with long N-terminals containing GPS domains and Ser/Thr-rich regions.</title>
        <authorList>
            <person name="Fredriksson R."/>
            <person name="Lagerstroem M.C."/>
            <person name="Hoeglund P.J."/>
            <person name="Schioeth H.B."/>
        </authorList>
    </citation>
    <scope>NUCLEOTIDE SEQUENCE [MRNA]</scope>
</reference>
<reference key="3">
    <citation type="journal article" date="2004" name="Nat. Genet.">
        <title>Complete sequencing and characterization of 21,243 full-length human cDNAs.</title>
        <authorList>
            <person name="Ota T."/>
            <person name="Suzuki Y."/>
            <person name="Nishikawa T."/>
            <person name="Otsuki T."/>
            <person name="Sugiyama T."/>
            <person name="Irie R."/>
            <person name="Wakamatsu A."/>
            <person name="Hayashi K."/>
            <person name="Sato H."/>
            <person name="Nagai K."/>
            <person name="Kimura K."/>
            <person name="Makita H."/>
            <person name="Sekine M."/>
            <person name="Obayashi M."/>
            <person name="Nishi T."/>
            <person name="Shibahara T."/>
            <person name="Tanaka T."/>
            <person name="Ishii S."/>
            <person name="Yamamoto J."/>
            <person name="Saito K."/>
            <person name="Kawai Y."/>
            <person name="Isono Y."/>
            <person name="Nakamura Y."/>
            <person name="Nagahari K."/>
            <person name="Murakami K."/>
            <person name="Yasuda T."/>
            <person name="Iwayanagi T."/>
            <person name="Wagatsuma M."/>
            <person name="Shiratori A."/>
            <person name="Sudo H."/>
            <person name="Hosoiri T."/>
            <person name="Kaku Y."/>
            <person name="Kodaira H."/>
            <person name="Kondo H."/>
            <person name="Sugawara M."/>
            <person name="Takahashi M."/>
            <person name="Kanda K."/>
            <person name="Yokoi T."/>
            <person name="Furuya T."/>
            <person name="Kikkawa E."/>
            <person name="Omura Y."/>
            <person name="Abe K."/>
            <person name="Kamihara K."/>
            <person name="Katsuta N."/>
            <person name="Sato K."/>
            <person name="Tanikawa M."/>
            <person name="Yamazaki M."/>
            <person name="Ninomiya K."/>
            <person name="Ishibashi T."/>
            <person name="Yamashita H."/>
            <person name="Murakawa K."/>
            <person name="Fujimori K."/>
            <person name="Tanai H."/>
            <person name="Kimata M."/>
            <person name="Watanabe M."/>
            <person name="Hiraoka S."/>
            <person name="Chiba Y."/>
            <person name="Ishida S."/>
            <person name="Ono Y."/>
            <person name="Takiguchi S."/>
            <person name="Watanabe S."/>
            <person name="Yosida M."/>
            <person name="Hotuta T."/>
            <person name="Kusano J."/>
            <person name="Kanehori K."/>
            <person name="Takahashi-Fujii A."/>
            <person name="Hara H."/>
            <person name="Tanase T.-O."/>
            <person name="Nomura Y."/>
            <person name="Togiya S."/>
            <person name="Komai F."/>
            <person name="Hara R."/>
            <person name="Takeuchi K."/>
            <person name="Arita M."/>
            <person name="Imose N."/>
            <person name="Musashino K."/>
            <person name="Yuuki H."/>
            <person name="Oshima A."/>
            <person name="Sasaki N."/>
            <person name="Aotsuka S."/>
            <person name="Yoshikawa Y."/>
            <person name="Matsunawa H."/>
            <person name="Ichihara T."/>
            <person name="Shiohata N."/>
            <person name="Sano S."/>
            <person name="Moriya S."/>
            <person name="Momiyama H."/>
            <person name="Satoh N."/>
            <person name="Takami S."/>
            <person name="Terashima Y."/>
            <person name="Suzuki O."/>
            <person name="Nakagawa S."/>
            <person name="Senoh A."/>
            <person name="Mizoguchi H."/>
            <person name="Goto Y."/>
            <person name="Shimizu F."/>
            <person name="Wakebe H."/>
            <person name="Hishigaki H."/>
            <person name="Watanabe T."/>
            <person name="Sugiyama A."/>
            <person name="Takemoto M."/>
            <person name="Kawakami B."/>
            <person name="Yamazaki M."/>
            <person name="Watanabe K."/>
            <person name="Kumagai A."/>
            <person name="Itakura S."/>
            <person name="Fukuzumi Y."/>
            <person name="Fujimori Y."/>
            <person name="Komiyama M."/>
            <person name="Tashiro H."/>
            <person name="Tanigami A."/>
            <person name="Fujiwara T."/>
            <person name="Ono T."/>
            <person name="Yamada K."/>
            <person name="Fujii Y."/>
            <person name="Ozaki K."/>
            <person name="Hirao M."/>
            <person name="Ohmori Y."/>
            <person name="Kawabata A."/>
            <person name="Hikiji T."/>
            <person name="Kobatake N."/>
            <person name="Inagaki H."/>
            <person name="Ikema Y."/>
            <person name="Okamoto S."/>
            <person name="Okitani R."/>
            <person name="Kawakami T."/>
            <person name="Noguchi S."/>
            <person name="Itoh T."/>
            <person name="Shigeta K."/>
            <person name="Senba T."/>
            <person name="Matsumura K."/>
            <person name="Nakajima Y."/>
            <person name="Mizuno T."/>
            <person name="Morinaga M."/>
            <person name="Sasaki M."/>
            <person name="Togashi T."/>
            <person name="Oyama M."/>
            <person name="Hata H."/>
            <person name="Watanabe M."/>
            <person name="Komatsu T."/>
            <person name="Mizushima-Sugano J."/>
            <person name="Satoh T."/>
            <person name="Shirai Y."/>
            <person name="Takahashi Y."/>
            <person name="Nakagawa K."/>
            <person name="Okumura K."/>
            <person name="Nagase T."/>
            <person name="Nomura N."/>
            <person name="Kikuchi H."/>
            <person name="Masuho Y."/>
            <person name="Yamashita R."/>
            <person name="Nakai K."/>
            <person name="Yada T."/>
            <person name="Nakamura Y."/>
            <person name="Ohara O."/>
            <person name="Isogai T."/>
            <person name="Sugano S."/>
        </authorList>
    </citation>
    <scope>NUCLEOTIDE SEQUENCE [LARGE SCALE MRNA]</scope>
</reference>
<reference key="4">
    <citation type="journal article" date="2004" name="Genome Res.">
        <title>The status, quality, and expansion of the NIH full-length cDNA project: the Mammalian Gene Collection (MGC).</title>
        <authorList>
            <consortium name="The MGC Project Team"/>
        </authorList>
    </citation>
    <scope>NUCLEOTIDE SEQUENCE [LARGE SCALE MRNA]</scope>
    <source>
        <tissue>Lung</tissue>
    </source>
</reference>
<reference key="5">
    <citation type="journal article" date="2004" name="Protein Sci.">
        <title>Signal peptide prediction based on analysis of experimentally verified cleavage sites.</title>
        <authorList>
            <person name="Zhang Z."/>
            <person name="Henzel W.J."/>
        </authorList>
    </citation>
    <scope>PROTEIN SEQUENCE OF 21-35</scope>
</reference>
<reference key="6">
    <citation type="journal article" date="2003" name="Proc. Natl. Acad. Sci. U.S.A.">
        <title>The G protein-coupled receptor repertoires of human and mouse.</title>
        <authorList>
            <person name="Vassilatis D.K."/>
            <person name="Hohmann J.G."/>
            <person name="Zeng H."/>
            <person name="Li F."/>
            <person name="Ranchalis J.E."/>
            <person name="Mortrud M.T."/>
            <person name="Brown A."/>
            <person name="Rodriguez S.S."/>
            <person name="Weller J.R."/>
            <person name="Wright A.C."/>
            <person name="Bergmann J.E."/>
            <person name="Gaitanaris G.A."/>
        </authorList>
    </citation>
    <scope>NUCLEOTIDE SEQUENCE [LARGE SCALE MRNA] OF 299-387</scope>
</reference>
<reference key="7">
    <citation type="journal article" date="2012" name="FEBS Lett.">
        <title>Signaling property study of adhesion G-protein-coupled receptors.</title>
        <authorList>
            <person name="Gupte J."/>
            <person name="Swaminath G."/>
            <person name="Danao J."/>
            <person name="Tian H."/>
            <person name="Li Y."/>
            <person name="Wu X."/>
        </authorList>
    </citation>
    <scope>FUNCTION</scope>
    <scope>SUBCELLULAR LOCATION</scope>
</reference>
<reference key="8">
    <citation type="journal article" date="2013" name="J. Biol. Chem.">
        <title>The orphan adhesion G protein-coupled receptor GPR97 regulates migration of lymphatic endothelial cells via the small GTPases RhoA and Cdc42.</title>
        <authorList>
            <person name="Valtcheva N."/>
            <person name="Primorac A."/>
            <person name="Jurisic G."/>
            <person name="Hollmen M."/>
            <person name="Detmar M."/>
        </authorList>
    </citation>
    <scope>TISSUE SPECIFICITY</scope>
    <scope>FUNCTION</scope>
</reference>
<reference key="9">
    <citation type="journal article" date="2015" name="Pharmacol. Rev.">
        <title>International union of basic and clinical pharmacology. XCIV. Adhesion G protein-coupled receptors.</title>
        <authorList>
            <person name="Hamann J."/>
            <person name="Aust G."/>
            <person name="Arac D."/>
            <person name="Engel F.B."/>
            <person name="Formstone C."/>
            <person name="Fredriksson R."/>
            <person name="Hall R.A."/>
            <person name="Harty B.L."/>
            <person name="Kirchhoff C."/>
            <person name="Knapp B."/>
            <person name="Krishnan A."/>
            <person name="Liebscher I."/>
            <person name="Lin H.H."/>
            <person name="Martinelli D.C."/>
            <person name="Monk K.R."/>
            <person name="Peeters M.C."/>
            <person name="Piao X."/>
            <person name="Promel S."/>
            <person name="Schoneberg T."/>
            <person name="Schwartz T.W."/>
            <person name="Singer K."/>
            <person name="Stacey M."/>
            <person name="Ushkaryov Y.A."/>
            <person name="Vallon M."/>
            <person name="Wolfrum U."/>
            <person name="Wright M.W."/>
            <person name="Xu L."/>
            <person name="Langenhan T."/>
            <person name="Schioth H.B."/>
        </authorList>
    </citation>
    <scope>NOMENCLATURE</scope>
</reference>
<reference key="10">
    <citation type="journal article" date="2018" name="Front. Immunol.">
        <title>The Adhesion G Protein-Coupled Receptor GPR97/ADGRG3 Is Expressed in Human Granulocytes and Triggers Antimicrobial Effector Functions.</title>
        <authorList>
            <person name="Hsiao C.C."/>
            <person name="Chu T.Y."/>
            <person name="Wu C.J."/>
            <person name="van den Biggelaar M."/>
            <person name="Pabst C."/>
            <person name="Hebert J."/>
            <person name="Kuijpers T.W."/>
            <person name="Scicluna B.P."/>
            <person name="I K.Y."/>
            <person name="Chen T.C."/>
            <person name="Liebscher I."/>
            <person name="Hamann J."/>
            <person name="Lin H.H."/>
        </authorList>
    </citation>
    <scope>FUNCTION</scope>
    <scope>GLYCOSYLATION</scope>
    <scope>INDUCTION BY INFLAMMATION</scope>
    <scope>TISSUE SPECIFICITY</scope>
</reference>
<reference evidence="15 16" key="11">
    <citation type="journal article" date="2021" name="Nature">
        <title>Structures of the glucocorticoid-bound adhesion receptor GPR97-Go complex.</title>
        <authorList>
            <person name="Ping Y.Q."/>
            <person name="Mao C."/>
            <person name="Xiao P."/>
            <person name="Zhao R.J."/>
            <person name="Jiang Y."/>
            <person name="Yang Z."/>
            <person name="An W.T."/>
            <person name="Shen D.D."/>
            <person name="Yang F."/>
            <person name="Zhang H."/>
            <person name="Qu C."/>
            <person name="Shen Q."/>
            <person name="Tian C."/>
            <person name="Li Z.J."/>
            <person name="Li S."/>
            <person name="Wang G.Y."/>
            <person name="Tao X."/>
            <person name="Wen X."/>
            <person name="Zhong Y.N."/>
            <person name="Yang J."/>
            <person name="Yi F."/>
            <person name="Yu X."/>
            <person name="Xu H.E."/>
            <person name="Zhang Y."/>
            <person name="Sun J.P."/>
        </authorList>
    </citation>
    <scope>STRUCTURE BY ELECTRON MICROSCOPY (2.90 ANGSTROMS) OF 14-549</scope>
    <scope>FUNCTION</scope>
    <scope>DISULFIDE BOND</scope>
    <scope>INTERACTION WITH GNAO1</scope>
</reference>
<reference evidence="17" key="12">
    <citation type="journal article" date="2022" name="Nat. Commun.">
        <title>GPR97 triggers inflammatory processes in human neutrophils via a macromolecular complex upstream of PAR2 activation.</title>
        <authorList>
            <person name="Chu T.Y."/>
            <person name="Zheng-Gerard C."/>
            <person name="Huang K.Y."/>
            <person name="Chang Y.C."/>
            <person name="Chen Y.W."/>
            <person name="I K.Y."/>
            <person name="Lo Y.L."/>
            <person name="Chiang N.Y."/>
            <person name="Chen H.Y."/>
            <person name="Stacey M."/>
            <person name="Gordon S."/>
            <person name="Tseng W.Y."/>
            <person name="Sun C.Y."/>
            <person name="Wu Y.M."/>
            <person name="Pan Y.S."/>
            <person name="Huang C.H."/>
            <person name="Lin C.Y."/>
            <person name="Chen T.C."/>
            <person name="El Omari K."/>
            <person name="Antonelou M."/>
            <person name="Henderson S.R."/>
            <person name="Salama A."/>
            <person name="Seiradake E."/>
            <person name="Lin H.H."/>
        </authorList>
    </citation>
    <scope>X-RAY CRYSTALLOGRAPHY (3.37 ANGSTROMS) OF 1-264</scope>
    <scope>FUNCTION</scope>
    <scope>INTERACTION WITH PRTN3</scope>
</reference>
<accession>Q86Y34</accession>
<accession>Q6ZMF4</accession>
<accession>Q86SL9</accession>
<accession>Q8IZF1</accession>
<keyword id="KW-0002">3D-structure</keyword>
<keyword id="KW-1003">Cell membrane</keyword>
<keyword id="KW-0903">Direct protein sequencing</keyword>
<keyword id="KW-1015">Disulfide bond</keyword>
<keyword id="KW-0297">G-protein coupled receptor</keyword>
<keyword id="KW-0325">Glycoprotein</keyword>
<keyword id="KW-0472">Membrane</keyword>
<keyword id="KW-1267">Proteomics identification</keyword>
<keyword id="KW-0675">Receptor</keyword>
<keyword id="KW-1185">Reference proteome</keyword>
<keyword id="KW-0732">Signal</keyword>
<keyword id="KW-0807">Transducer</keyword>
<keyword id="KW-0812">Transmembrane</keyword>
<keyword id="KW-1133">Transmembrane helix</keyword>
<protein>
    <recommendedName>
        <fullName evidence="10">Adhesion G protein-coupled receptor G3</fullName>
    </recommendedName>
    <alternativeName>
        <fullName evidence="12">G-protein coupled receptor 97</fullName>
    </alternativeName>
    <component>
        <recommendedName>
            <fullName evidence="13">Adhesion G-protein coupled receptor G3, N-terminal fragment</fullName>
            <shortName evidence="13">ADGRG3 N-terminal fragment</shortName>
        </recommendedName>
    </component>
    <component>
        <recommendedName>
            <fullName evidence="13">Adhesion G-protein coupled receptor G3, C-terminal fragment</fullName>
            <shortName evidence="13">ADGRG3 C-terminal fragment</shortName>
        </recommendedName>
    </component>
</protein>
<gene>
    <name evidence="11 14" type="primary">ADGRG3</name>
    <name evidence="12" type="synonym">GPR97</name>
    <name type="synonym">PGR26</name>
</gene>
<dbReference type="EMBL" id="AB049169">
    <property type="protein sequence ID" value="BAC67700.1"/>
    <property type="molecule type" value="mRNA"/>
</dbReference>
<dbReference type="EMBL" id="AY140959">
    <property type="protein sequence ID" value="AAN46673.1"/>
    <property type="molecule type" value="mRNA"/>
</dbReference>
<dbReference type="EMBL" id="AK172801">
    <property type="protein sequence ID" value="BAD18774.1"/>
    <property type="status" value="ALT_FRAME"/>
    <property type="molecule type" value="mRNA"/>
</dbReference>
<dbReference type="EMBL" id="BC064508">
    <property type="protein sequence ID" value="AAH64508.1"/>
    <property type="molecule type" value="mRNA"/>
</dbReference>
<dbReference type="EMBL" id="AY255601">
    <property type="protein sequence ID" value="AAO85113.1"/>
    <property type="molecule type" value="mRNA"/>
</dbReference>
<dbReference type="CCDS" id="CCDS10786.1"/>
<dbReference type="RefSeq" id="NP_001295289.1">
    <property type="nucleotide sequence ID" value="NM_001308360.1"/>
</dbReference>
<dbReference type="RefSeq" id="NP_740746.4">
    <property type="nucleotide sequence ID" value="NM_170776.4"/>
</dbReference>
<dbReference type="PDB" id="7D76">
    <property type="method" value="EM"/>
    <property type="resolution" value="3.10 A"/>
    <property type="chains" value="R=14-549"/>
</dbReference>
<dbReference type="PDB" id="7D77">
    <property type="method" value="EM"/>
    <property type="resolution" value="2.90 A"/>
    <property type="chains" value="R=14-549"/>
</dbReference>
<dbReference type="PDB" id="7QU8">
    <property type="method" value="X-ray"/>
    <property type="resolution" value="3.37 A"/>
    <property type="chains" value="A/B/C/D=1-264"/>
</dbReference>
<dbReference type="PDBsum" id="7D76"/>
<dbReference type="PDBsum" id="7D77"/>
<dbReference type="PDBsum" id="7QU8"/>
<dbReference type="EMDB" id="EMD-30602"/>
<dbReference type="EMDB" id="EMD-30603"/>
<dbReference type="SMR" id="Q86Y34"/>
<dbReference type="BioGRID" id="128799">
    <property type="interactions" value="12"/>
</dbReference>
<dbReference type="FunCoup" id="Q86Y34">
    <property type="interactions" value="261"/>
</dbReference>
<dbReference type="IntAct" id="Q86Y34">
    <property type="interactions" value="12"/>
</dbReference>
<dbReference type="STRING" id="9606.ENSP00000332900"/>
<dbReference type="ChEMBL" id="CHEMBL3559707"/>
<dbReference type="DrugCentral" id="Q86Y34"/>
<dbReference type="GuidetoPHARMACOLOGY" id="188"/>
<dbReference type="MEROPS" id="P02.023"/>
<dbReference type="GlyCosmos" id="Q86Y34">
    <property type="glycosylation" value="4 sites, No reported glycans"/>
</dbReference>
<dbReference type="GlyGen" id="Q86Y34">
    <property type="glycosylation" value="4 sites"/>
</dbReference>
<dbReference type="iPTMnet" id="Q86Y34"/>
<dbReference type="PhosphoSitePlus" id="Q86Y34"/>
<dbReference type="BioMuta" id="ADGRG3"/>
<dbReference type="DMDM" id="50400483"/>
<dbReference type="MassIVE" id="Q86Y34"/>
<dbReference type="PaxDb" id="9606-ENSP00000332900"/>
<dbReference type="PeptideAtlas" id="Q86Y34"/>
<dbReference type="ProteomicsDB" id="70366"/>
<dbReference type="Antibodypedia" id="15147">
    <property type="antibodies" value="147 antibodies from 27 providers"/>
</dbReference>
<dbReference type="DNASU" id="222487"/>
<dbReference type="Ensembl" id="ENST00000333493.9">
    <property type="protein sequence ID" value="ENSP00000332900.4"/>
    <property type="gene ID" value="ENSG00000182885.17"/>
</dbReference>
<dbReference type="GeneID" id="222487"/>
<dbReference type="KEGG" id="hsa:222487"/>
<dbReference type="MANE-Select" id="ENST00000333493.9">
    <property type="protein sequence ID" value="ENSP00000332900.4"/>
    <property type="RefSeq nucleotide sequence ID" value="NM_170776.5"/>
    <property type="RefSeq protein sequence ID" value="NP_740746.4"/>
</dbReference>
<dbReference type="UCSC" id="uc002emh.4">
    <property type="organism name" value="human"/>
</dbReference>
<dbReference type="AGR" id="HGNC:13728"/>
<dbReference type="CTD" id="222487"/>
<dbReference type="DisGeNET" id="222487"/>
<dbReference type="GeneCards" id="ADGRG3"/>
<dbReference type="HGNC" id="HGNC:13728">
    <property type="gene designation" value="ADGRG3"/>
</dbReference>
<dbReference type="HPA" id="ENSG00000182885">
    <property type="expression patterns" value="Tissue enriched (bone)"/>
</dbReference>
<dbReference type="MIM" id="618441">
    <property type="type" value="gene"/>
</dbReference>
<dbReference type="neXtProt" id="NX_Q86Y34"/>
<dbReference type="OpenTargets" id="ENSG00000182885"/>
<dbReference type="PharmGKB" id="PA28936"/>
<dbReference type="VEuPathDB" id="HostDB:ENSG00000182885"/>
<dbReference type="eggNOG" id="KOG4193">
    <property type="taxonomic scope" value="Eukaryota"/>
</dbReference>
<dbReference type="GeneTree" id="ENSGT00940000154285"/>
<dbReference type="InParanoid" id="Q86Y34"/>
<dbReference type="OMA" id="TLFKGPQ"/>
<dbReference type="OrthoDB" id="6134459at2759"/>
<dbReference type="PAN-GO" id="Q86Y34">
    <property type="GO annotations" value="3 GO annotations based on evolutionary models"/>
</dbReference>
<dbReference type="PhylomeDB" id="Q86Y34"/>
<dbReference type="TreeFam" id="TF321769"/>
<dbReference type="PathwayCommons" id="Q86Y34"/>
<dbReference type="Reactome" id="R-HSA-6798695">
    <property type="pathway name" value="Neutrophil degranulation"/>
</dbReference>
<dbReference type="SignaLink" id="Q86Y34"/>
<dbReference type="BioGRID-ORCS" id="222487">
    <property type="hits" value="11 hits in 1149 CRISPR screens"/>
</dbReference>
<dbReference type="ChiTaRS" id="ADGRG3">
    <property type="organism name" value="human"/>
</dbReference>
<dbReference type="GeneWiki" id="GPR97"/>
<dbReference type="GenomeRNAi" id="222487"/>
<dbReference type="Pharos" id="Q86Y34">
    <property type="development level" value="Tchem"/>
</dbReference>
<dbReference type="PRO" id="PR:Q86Y34"/>
<dbReference type="Proteomes" id="UP000005640">
    <property type="component" value="Chromosome 16"/>
</dbReference>
<dbReference type="RNAct" id="Q86Y34">
    <property type="molecule type" value="protein"/>
</dbReference>
<dbReference type="Bgee" id="ENSG00000182885">
    <property type="expression patterns" value="Expressed in blood and 100 other cell types or tissues"/>
</dbReference>
<dbReference type="ExpressionAtlas" id="Q86Y34">
    <property type="expression patterns" value="baseline and differential"/>
</dbReference>
<dbReference type="GO" id="GO:0016020">
    <property type="term" value="C:membrane"/>
    <property type="evidence" value="ECO:0000304"/>
    <property type="project" value="GDB"/>
</dbReference>
<dbReference type="GO" id="GO:0005886">
    <property type="term" value="C:plasma membrane"/>
    <property type="evidence" value="ECO:0000315"/>
    <property type="project" value="UniProtKB"/>
</dbReference>
<dbReference type="GO" id="GO:0035579">
    <property type="term" value="C:specific granule membrane"/>
    <property type="evidence" value="ECO:0000304"/>
    <property type="project" value="Reactome"/>
</dbReference>
<dbReference type="GO" id="GO:0004930">
    <property type="term" value="F:G protein-coupled receptor activity"/>
    <property type="evidence" value="ECO:0000318"/>
    <property type="project" value="GO_Central"/>
</dbReference>
<dbReference type="GO" id="GO:0007189">
    <property type="term" value="P:adenylate cyclase-activating G protein-coupled receptor signaling pathway"/>
    <property type="evidence" value="ECO:0000318"/>
    <property type="project" value="GO_Central"/>
</dbReference>
<dbReference type="GO" id="GO:0030183">
    <property type="term" value="P:B cell differentiation"/>
    <property type="evidence" value="ECO:0000250"/>
    <property type="project" value="UniProtKB"/>
</dbReference>
<dbReference type="GO" id="GO:0007166">
    <property type="term" value="P:cell surface receptor signaling pathway"/>
    <property type="evidence" value="ECO:0007669"/>
    <property type="project" value="InterPro"/>
</dbReference>
<dbReference type="GO" id="GO:0007186">
    <property type="term" value="P:G protein-coupled receptor signaling pathway"/>
    <property type="evidence" value="ECO:0000314"/>
    <property type="project" value="UniProtKB"/>
</dbReference>
<dbReference type="GO" id="GO:0032792">
    <property type="term" value="P:negative regulation of CREB transcription factor activity"/>
    <property type="evidence" value="ECO:0000250"/>
    <property type="project" value="UniProtKB"/>
</dbReference>
<dbReference type="GO" id="GO:1901223">
    <property type="term" value="P:negative regulation of non-canonical NF-kappaB signal transduction"/>
    <property type="evidence" value="ECO:0000250"/>
    <property type="project" value="UniProtKB"/>
</dbReference>
<dbReference type="GO" id="GO:0030334">
    <property type="term" value="P:regulation of cell migration"/>
    <property type="evidence" value="ECO:0000315"/>
    <property type="project" value="UniProtKB"/>
</dbReference>
<dbReference type="CDD" id="cd15442">
    <property type="entry name" value="7tmB2_GPR97"/>
    <property type="match status" value="1"/>
</dbReference>
<dbReference type="FunFam" id="1.20.1070.10:FF:000222">
    <property type="entry name" value="Adhesion G protein-coupled receptor G3"/>
    <property type="match status" value="1"/>
</dbReference>
<dbReference type="FunFam" id="2.60.220.50:FF:000023">
    <property type="entry name" value="Adhesion G protein-coupled receptor G3"/>
    <property type="match status" value="1"/>
</dbReference>
<dbReference type="Gene3D" id="2.60.220.50">
    <property type="match status" value="1"/>
</dbReference>
<dbReference type="Gene3D" id="1.20.1070.10">
    <property type="entry name" value="Rhodopsin 7-helix transmembrane proteins"/>
    <property type="match status" value="1"/>
</dbReference>
<dbReference type="InterPro" id="IPR057244">
    <property type="entry name" value="GAIN_B"/>
</dbReference>
<dbReference type="InterPro" id="IPR046338">
    <property type="entry name" value="GAIN_dom_sf"/>
</dbReference>
<dbReference type="InterPro" id="IPR017981">
    <property type="entry name" value="GPCR_2-like_7TM"/>
</dbReference>
<dbReference type="InterPro" id="IPR000832">
    <property type="entry name" value="GPCR_2_secretin-like"/>
</dbReference>
<dbReference type="InterPro" id="IPR003910">
    <property type="entry name" value="GPR1/GPR3/GPR5"/>
</dbReference>
<dbReference type="InterPro" id="IPR000203">
    <property type="entry name" value="GPS"/>
</dbReference>
<dbReference type="PANTHER" id="PTHR12011:SF285">
    <property type="entry name" value="ADHESION G PROTEIN-COUPLED RECEPTOR G3"/>
    <property type="match status" value="1"/>
</dbReference>
<dbReference type="PANTHER" id="PTHR12011">
    <property type="entry name" value="ADHESION G-PROTEIN COUPLED RECEPTOR"/>
    <property type="match status" value="1"/>
</dbReference>
<dbReference type="Pfam" id="PF00002">
    <property type="entry name" value="7tm_2"/>
    <property type="match status" value="1"/>
</dbReference>
<dbReference type="Pfam" id="PF01825">
    <property type="entry name" value="GPS"/>
    <property type="match status" value="1"/>
</dbReference>
<dbReference type="PRINTS" id="PR00249">
    <property type="entry name" value="GPCRSECRETIN"/>
</dbReference>
<dbReference type="PRINTS" id="PR01422">
    <property type="entry name" value="GPR56ORPHANR"/>
</dbReference>
<dbReference type="SMART" id="SM00303">
    <property type="entry name" value="GPS"/>
    <property type="match status" value="1"/>
</dbReference>
<dbReference type="PROSITE" id="PS50261">
    <property type="entry name" value="G_PROTEIN_RECEP_F2_4"/>
    <property type="match status" value="1"/>
</dbReference>
<dbReference type="PROSITE" id="PS50221">
    <property type="entry name" value="GAIN_B"/>
    <property type="match status" value="1"/>
</dbReference>
<organism>
    <name type="scientific">Homo sapiens</name>
    <name type="common">Human</name>
    <dbReference type="NCBI Taxonomy" id="9606"/>
    <lineage>
        <taxon>Eukaryota</taxon>
        <taxon>Metazoa</taxon>
        <taxon>Chordata</taxon>
        <taxon>Craniata</taxon>
        <taxon>Vertebrata</taxon>
        <taxon>Euteleostomi</taxon>
        <taxon>Mammalia</taxon>
        <taxon>Eutheria</taxon>
        <taxon>Euarchontoglires</taxon>
        <taxon>Primates</taxon>
        <taxon>Haplorrhini</taxon>
        <taxon>Catarrhini</taxon>
        <taxon>Hominidae</taxon>
        <taxon>Homo</taxon>
    </lineage>
</organism>
<sequence>MATPRGLGALLLLLLLPTSGQEKPTEGPRNTCLGSNNMYDIFNLNDKALCFTKCRQSGSDSCNVENLQRYWLNYEAHLMKEGLTQKVNTPFLKALVQNLSTNTAEDFYFSLEPSQVPRQVMKDEDKPPDRVRLPKSLFRSLPGNRSVVRLAVTILDIGPGTLFKGPRLGLGDGSGVLNNRLVGLSVGQMHVTKLAEPLEIVFSHQRPPPNMTLTCVFWDVTKGTTGDWSSEGCSTEVRPEGTVCCCDHLTFFALLLRPTLDQSTVHILTRISQAGCGVSMIFLAFTIILYAFLRLSRERFKSEDAPKIHVALGGSLFLLNLAFLVNVGSGSKGSDAACWARGAVFHYFLLCAFTWMGLEAFHLYLLAVRVFNTYFGHYFLKLSLVGWGLPALMVIGTGSANSYGLYTIRDRENRTSLELCWFREGTTMYALYITVHGYFLITFLFGMVVLALVVWKIFTLSRATAVKERGKNRKKVLTLLGLSSLVGVTWGLAIFTPLGLSTVYIFALFNSLQGVFICCWFTILYLPSQSTTVSSSTARLDQAHSASQE</sequence>
<comment type="function">
    <text evidence="5 6 7 8 9">Adhesion G-protein coupled receptor (aGPCR) for glucocorticoid hormones such as cortisol, cortisone and 11-deoxycortisol (PubMed:33408414). Ligand binding causes a conformation change that triggers signaling via guanine nucleotide-binding proteins (G proteins) and modulates the activity of downstream effectors, such as adenylate cyclase (PubMed:33408414). ADGRG3/GPR97 is coupled to G(o)/GNAO1 G proteins and mediates signaling by inhibiting adenylate cyclase activity (PubMed:33408414). May also signal through G-alpha(q)-proteins; additional evidence are however required to confirm this result in vivo (PubMed:22575658). Plays a role in the regulation of various processes including B-cell development, inflammation or innate immunity (PubMed:30559745, PubMed:36302784). Regulates migration of lymphatic endothelial cells in vitro via the small GTPases RhoA and CDC42 (PubMed:24178298). Antibody ligation leads to the production and activation of antimicrobial mediators like reactive oxygen species (ROS) and myeloperoxidase (MPO) as well as enhanced bacteria uptake and killing by granulocytes (PubMed:30559745). Additionally, collaborates with protease-activated receptor 2/PAR2 to stimulate neutrophil-driven antimicrobial responses and endothelial cell activation (PubMed:36302784).</text>
</comment>
<comment type="activity regulation">
    <text evidence="1 3">Forms a heterodimer of 2 chains generated by proteolytic processing that remain associated through non-covalent interactions mediated by the GAIN-B domain (By similarity). In the inactivated receptor, the Stachel sequence (also named stalk) is embedded in the GAIN-B domain, where it adopts a beta-strand conformation (By similarity). On activation, the Stachel moves into the 7 transmembrane region and adopts a twisted hook-shaped configuration that forms contacts within the receptor, leading to coupling of a G-alpha protein, which activates signaling (By similarity). The cleaved GAIN-B and N-terminal domains can then dissociate from the rest of the receptor (By similarity).</text>
</comment>
<comment type="subunit">
    <text evidence="3 8 9">Heterodimer of 2 chains generated by proteolytic processing; the large extracellular N-terminal fragment and the membrane-bound C-terminal fragment predominantly remain associated and non-covalently linked (By similarity). Interacts with PRTN3; this interaction induces the activation of PAR2 (PubMed:36302784). Interacts with GNAO1 (when palmitoylated) (PubMed:33408414).</text>
</comment>
<comment type="interaction">
    <interactant intactId="EBI-17979264">
        <id>Q86Y34</id>
    </interactant>
    <interactant intactId="EBI-3904417">
        <id>Q99437</id>
        <label>ATP6V0B</label>
    </interactant>
    <organismsDiffer>false</organismsDiffer>
    <experiments>3</experiments>
</comment>
<comment type="interaction">
    <interactant intactId="EBI-17979264">
        <id>Q86Y34</id>
    </interactant>
    <interactant intactId="EBI-12003442">
        <id>Q8WVX3-2</id>
        <label>C4orf3</label>
    </interactant>
    <organismsDiffer>false</organismsDiffer>
    <experiments>3</experiments>
</comment>
<comment type="interaction">
    <interactant intactId="EBI-17979264">
        <id>Q86Y34</id>
    </interactant>
    <interactant intactId="EBI-12019274">
        <id>Q4LDR2</id>
        <label>CTXN3</label>
    </interactant>
    <organismsDiffer>false</organismsDiffer>
    <experiments>3</experiments>
</comment>
<comment type="interaction">
    <interactant intactId="EBI-17979264">
        <id>Q86Y34</id>
    </interactant>
    <interactant intactId="EBI-6166686">
        <id>Q96F15</id>
        <label>GIMAP5</label>
    </interactant>
    <organismsDiffer>false</organismsDiffer>
    <experiments>3</experiments>
</comment>
<comment type="interaction">
    <interactant intactId="EBI-17979264">
        <id>Q86Y34</id>
    </interactant>
    <interactant intactId="EBI-2820517">
        <id>Q8TAF8</id>
        <label>LHFPL5</label>
    </interactant>
    <organismsDiffer>false</organismsDiffer>
    <experiments>3</experiments>
</comment>
<comment type="interaction">
    <interactant intactId="EBI-17979264">
        <id>Q86Y34</id>
    </interactant>
    <interactant intactId="EBI-12188331">
        <id>P60201-2</id>
        <label>PLP1</label>
    </interactant>
    <organismsDiffer>false</organismsDiffer>
    <experiments>3</experiments>
</comment>
<comment type="interaction">
    <interactant intactId="EBI-17979264">
        <id>Q86Y34</id>
    </interactant>
    <interactant intactId="EBI-1052363">
        <id>Q9NS64</id>
        <label>RPRM</label>
    </interactant>
    <organismsDiffer>false</organismsDiffer>
    <experiments>3</experiments>
</comment>
<comment type="interaction">
    <interactant intactId="EBI-17979264">
        <id>Q86Y34</id>
    </interactant>
    <interactant intactId="EBI-8652744">
        <id>Q96IW7</id>
        <label>SEC22A</label>
    </interactant>
    <organismsDiffer>false</organismsDiffer>
    <experiments>3</experiments>
</comment>
<comment type="interaction">
    <interactant intactId="EBI-17979264">
        <id>Q86Y34</id>
    </interactant>
    <interactant intactId="EBI-10329860">
        <id>Q9Y6I9</id>
        <label>TEX264</label>
    </interactant>
    <organismsDiffer>false</organismsDiffer>
    <experiments>3</experiments>
</comment>
<comment type="interaction">
    <interactant intactId="EBI-17979264">
        <id>Q86Y34</id>
    </interactant>
    <interactant intactId="EBI-10243654">
        <id>Q5BVD1</id>
        <label>TTMP</label>
    </interactant>
    <organismsDiffer>false</organismsDiffer>
    <experiments>3</experiments>
</comment>
<comment type="interaction">
    <interactant intactId="EBI-17979264">
        <id>Q86Y34</id>
    </interactant>
    <interactant intactId="EBI-10179682">
        <id>O00526</id>
        <label>UPK2</label>
    </interactant>
    <organismsDiffer>false</organismsDiffer>
    <experiments>3</experiments>
</comment>
<comment type="interaction">
    <interactant intactId="EBI-17979264">
        <id>Q86Y34</id>
    </interactant>
    <interactant intactId="EBI-12190699">
        <id>Q6UX27-3</id>
        <label>VSTM1</label>
    </interactant>
    <organismsDiffer>false</organismsDiffer>
    <experiments>3</experiments>
</comment>
<comment type="subcellular location">
    <subcellularLocation>
        <location evidence="5">Cell membrane</location>
        <topology evidence="8">Multi-pass membrane protein</topology>
    </subcellularLocation>
</comment>
<comment type="tissue specificity">
    <text evidence="6 7">Expressed in cultured primary dermal lymphatic endothelial cells (PubMed:24178298). Highly expressed in polymorphonuclear cells (PMNs) including neutrophilic, eosinophilic, and basophilic granulocytes (PubMed:30559745).</text>
</comment>
<comment type="induction">
    <text evidence="7">Under inflammatory conditions.</text>
</comment>
<comment type="domain">
    <text evidence="1">The Stachel sequence (also named stalk) in the C-terminal part of the extracellular domain (ECD) functions as a tethered agonist (By similarity). In the inactivated receptor, the Stachel sequence (also named stalk) is embedded in the GAIN-B domain, where it adopts a beta-strand conformation (By similarity). On activation, the Stachel moves into the 7 transmembrane region and adopts a twisted hook-shaped configuration that forms contacts within the receptor, leading to coupling of a G-alpha protein, which activates signaling (By similarity).</text>
</comment>
<comment type="PTM">
    <text evidence="3">Autoproteolytically processed at the GPS region of the GAIN-B domain; this cleavage modulates receptor activity.</text>
</comment>
<comment type="PTM">
    <text evidence="7">O- and N-glycosylated.</text>
</comment>
<comment type="similarity">
    <text evidence="13">Belongs to the G-protein coupled receptor 2 family. Adhesion G-protein coupled receptor (ADGR) subfamily.</text>
</comment>
<comment type="sequence caution" evidence="13">
    <conflict type="frameshift">
        <sequence resource="EMBL-CDS" id="BAD18774"/>
    </conflict>
</comment>
<feature type="signal peptide" evidence="4">
    <location>
        <begin position="1"/>
        <end position="20"/>
    </location>
</feature>
<feature type="chain" id="PRO_0000012889" description="Adhesion G protein-coupled receptor G3">
    <location>
        <begin position="21"/>
        <end position="549"/>
    </location>
</feature>
<feature type="chain" id="PRO_0000462379" description="Adhesion G-protein coupled receptor G3, N-terminal fragment" evidence="13">
    <location>
        <begin position="21"/>
        <end position="249"/>
    </location>
</feature>
<feature type="chain" id="PRO_0000462380" description="Adhesion G-protein coupled receptor G3, C-terminal fragment" evidence="13">
    <location>
        <begin position="250"/>
        <end position="549"/>
    </location>
</feature>
<feature type="topological domain" description="Extracellular" evidence="8 15 16">
    <location>
        <begin position="21"/>
        <end position="270"/>
    </location>
</feature>
<feature type="transmembrane region" description="Helical; Name=1" evidence="8 15 16">
    <location>
        <begin position="271"/>
        <end position="295"/>
    </location>
</feature>
<feature type="topological domain" description="Cytoplasmic" evidence="8 15 16">
    <location>
        <begin position="296"/>
        <end position="304"/>
    </location>
</feature>
<feature type="transmembrane region" description="Helical; Name=2" evidence="8 15 16">
    <location>
        <begin position="305"/>
        <end position="326"/>
    </location>
</feature>
<feature type="topological domain" description="Extracellular" evidence="8 15 16">
    <location>
        <begin position="327"/>
        <end position="338"/>
    </location>
</feature>
<feature type="transmembrane region" description="Helical; Name=3" evidence="8 15 16">
    <location>
        <begin position="339"/>
        <end position="364"/>
    </location>
</feature>
<feature type="topological domain" description="Cytoplasmic" evidence="8 15 16">
    <location>
        <begin position="365"/>
        <end position="378"/>
    </location>
</feature>
<feature type="transmembrane region" description="Helical; Name=4" evidence="8 15 16">
    <location>
        <begin position="379"/>
        <end position="400"/>
    </location>
</feature>
<feature type="topological domain" description="Extracellular" evidence="8 15 16">
    <location>
        <begin position="401"/>
        <end position="428"/>
    </location>
</feature>
<feature type="transmembrane region" description="Helical; Name=5" evidence="8 15 16">
    <location>
        <begin position="429"/>
        <end position="454"/>
    </location>
</feature>
<feature type="topological domain" description="Cytoplasmic" evidence="8 15 16">
    <location>
        <begin position="455"/>
        <end position="474"/>
    </location>
</feature>
<feature type="transmembrane region" description="Helical; Name=6" evidence="8 15 16">
    <location>
        <begin position="475"/>
        <end position="495"/>
    </location>
</feature>
<feature type="topological domain" description="Extracellular" evidence="8 15 16">
    <location>
        <begin position="496"/>
        <end position="501"/>
    </location>
</feature>
<feature type="transmembrane region" description="Helical; Name=7" evidence="8 15 16">
    <location>
        <begin position="502"/>
        <end position="525"/>
    </location>
</feature>
<feature type="topological domain" description="Cytoplasmic" evidence="8 15 16">
    <location>
        <begin position="526"/>
        <end position="549"/>
    </location>
</feature>
<feature type="domain" description="GAIN-B" evidence="3">
    <location>
        <begin position="107"/>
        <end position="262"/>
    </location>
</feature>
<feature type="region of interest" description="GPS" evidence="3">
    <location>
        <begin position="215"/>
        <end position="262"/>
    </location>
</feature>
<feature type="region of interest" description="Stachel" evidence="1">
    <location>
        <begin position="251"/>
        <end position="259"/>
    </location>
</feature>
<feature type="binding site" evidence="8">
    <location>
        <position position="510"/>
    </location>
    <ligand>
        <name>cortisol</name>
        <dbReference type="ChEBI" id="CHEBI:17650"/>
    </ligand>
</feature>
<feature type="site" description="Cleavage; by autolysis" evidence="3">
    <location>
        <begin position="249"/>
        <end position="250"/>
    </location>
</feature>
<feature type="glycosylation site" description="N-linked (GlcNAc...) asparagine" evidence="2">
    <location>
        <position position="98"/>
    </location>
</feature>
<feature type="glycosylation site" description="N-linked (GlcNAc...) asparagine" evidence="2">
    <location>
        <position position="144"/>
    </location>
</feature>
<feature type="glycosylation site" description="N-linked (GlcNAc...) asparagine" evidence="2">
    <location>
        <position position="210"/>
    </location>
</feature>
<feature type="glycosylation site" description="N-linked (GlcNAc...) asparagine" evidence="2">
    <location>
        <position position="413"/>
    </location>
</feature>
<feature type="disulfide bond" evidence="3">
    <location>
        <begin position="215"/>
        <end position="244"/>
    </location>
</feature>
<feature type="disulfide bond" evidence="3">
    <location>
        <begin position="233"/>
        <end position="246"/>
    </location>
</feature>
<feature type="disulfide bond" evidence="8 15 16">
    <location>
        <begin position="338"/>
        <end position="420"/>
    </location>
</feature>
<feature type="sequence variant" id="VAR_055927" description="In dbSNP:rs2290178.">
    <original>A</original>
    <variation>T</variation>
    <location>
        <position position="430"/>
    </location>
</feature>
<feature type="sequence conflict" description="In Ref. 2; AAN46673." evidence="13" ref="2">
    <original>G</original>
    <variation>W</variation>
    <location>
        <position position="8"/>
    </location>
</feature>
<feature type="sequence conflict" description="In Ref. 3; BAD18774." evidence="13" ref="3">
    <original>P</original>
    <variation>S</variation>
    <location>
        <position position="24"/>
    </location>
</feature>
<feature type="sequence conflict" description="In Ref. 3; BAD18774." evidence="13" ref="3">
    <original>K</original>
    <variation>R</variation>
    <location>
        <position position="193"/>
    </location>
</feature>
<feature type="sequence conflict" description="In Ref. 3; BAD18774." evidence="13" ref="3">
    <original>I</original>
    <variation>V</variation>
    <location>
        <position position="457"/>
    </location>
</feature>
<feature type="sequence conflict" description="In Ref. 4; AAH64508." evidence="13" ref="4">
    <original>A</original>
    <variation>V</variation>
    <location>
        <position position="465"/>
    </location>
</feature>
<feature type="helix" evidence="19">
    <location>
        <begin position="29"/>
        <end position="31"/>
    </location>
</feature>
<feature type="helix" evidence="19">
    <location>
        <begin position="41"/>
        <end position="48"/>
    </location>
</feature>
<feature type="helix" evidence="19">
    <location>
        <begin position="50"/>
        <end position="53"/>
    </location>
</feature>
<feature type="helix" evidence="19">
    <location>
        <begin position="64"/>
        <end position="80"/>
    </location>
</feature>
<feature type="strand" evidence="19">
    <location>
        <begin position="85"/>
        <end position="88"/>
    </location>
</feature>
<feature type="strand" evidence="19">
    <location>
        <begin position="90"/>
        <end position="102"/>
    </location>
</feature>
<feature type="strand" evidence="19">
    <location>
        <begin position="107"/>
        <end position="110"/>
    </location>
</feature>
<feature type="strand" evidence="19">
    <location>
        <begin position="128"/>
        <end position="133"/>
    </location>
</feature>
<feature type="helix" evidence="19">
    <location>
        <begin position="135"/>
        <end position="140"/>
    </location>
</feature>
<feature type="strand" evidence="19">
    <location>
        <begin position="141"/>
        <end position="143"/>
    </location>
</feature>
<feature type="strand" evidence="19">
    <location>
        <begin position="146"/>
        <end position="156"/>
    </location>
</feature>
<feature type="strand" evidence="19">
    <location>
        <begin position="159"/>
        <end position="161"/>
    </location>
</feature>
<feature type="turn" evidence="19">
    <location>
        <begin position="162"/>
        <end position="164"/>
    </location>
</feature>
<feature type="turn" evidence="19">
    <location>
        <begin position="166"/>
        <end position="168"/>
    </location>
</feature>
<feature type="helix" evidence="19">
    <location>
        <begin position="177"/>
        <end position="179"/>
    </location>
</feature>
<feature type="strand" evidence="19">
    <location>
        <begin position="180"/>
        <end position="183"/>
    </location>
</feature>
<feature type="strand" evidence="19">
    <location>
        <begin position="193"/>
        <end position="202"/>
    </location>
</feature>
<feature type="strand" evidence="19">
    <location>
        <begin position="212"/>
        <end position="219"/>
    </location>
</feature>
<feature type="strand" evidence="19">
    <location>
        <begin position="227"/>
        <end position="229"/>
    </location>
</feature>
<feature type="strand" evidence="19">
    <location>
        <begin position="233"/>
        <end position="238"/>
    </location>
</feature>
<feature type="strand" evidence="19">
    <location>
        <begin position="241"/>
        <end position="248"/>
    </location>
</feature>
<feature type="strand" evidence="19">
    <location>
        <begin position="251"/>
        <end position="257"/>
    </location>
</feature>
<feature type="helix" evidence="18">
    <location>
        <begin position="264"/>
        <end position="296"/>
    </location>
</feature>
<feature type="helix" evidence="18">
    <location>
        <begin position="300"/>
        <end position="302"/>
    </location>
</feature>
<feature type="helix" evidence="18">
    <location>
        <begin position="305"/>
        <end position="328"/>
    </location>
</feature>
<feature type="turn" evidence="18">
    <location>
        <begin position="329"/>
        <end position="331"/>
    </location>
</feature>
<feature type="helix" evidence="18">
    <location>
        <begin position="335"/>
        <end position="367"/>
    </location>
</feature>
<feature type="helix" evidence="18">
    <location>
        <begin position="378"/>
        <end position="399"/>
    </location>
</feature>
<feature type="strand" evidence="18">
    <location>
        <begin position="403"/>
        <end position="409"/>
    </location>
</feature>
<feature type="strand" evidence="18">
    <location>
        <begin position="413"/>
        <end position="422"/>
    </location>
</feature>
<feature type="helix" evidence="18">
    <location>
        <begin position="429"/>
        <end position="434"/>
    </location>
</feature>
<feature type="helix" evidence="18">
    <location>
        <begin position="436"/>
        <end position="460"/>
    </location>
</feature>
<feature type="turn" evidence="18">
    <location>
        <begin position="461"/>
        <end position="463"/>
    </location>
</feature>
<feature type="helix" evidence="18">
    <location>
        <begin position="472"/>
        <end position="494"/>
    </location>
</feature>
<feature type="strand" evidence="18">
    <location>
        <begin position="499"/>
        <end position="502"/>
    </location>
</feature>
<feature type="helix" evidence="18">
    <location>
        <begin position="503"/>
        <end position="524"/>
    </location>
</feature>